<gene>
    <name type="primary">TPT1</name>
</gene>
<evidence type="ECO:0000250" key="1">
    <source>
        <dbReference type="UniProtKB" id="P13693"/>
    </source>
</evidence>
<evidence type="ECO:0000250" key="2">
    <source>
        <dbReference type="UniProtKB" id="P63029"/>
    </source>
</evidence>
<evidence type="ECO:0000255" key="3">
    <source>
        <dbReference type="PROSITE-ProRule" id="PRU01133"/>
    </source>
</evidence>
<proteinExistence type="evidence at transcript level"/>
<name>TCTP_PIG</name>
<dbReference type="EMBL" id="AY072784">
    <property type="protein sequence ID" value="AAL68965.1"/>
    <property type="molecule type" value="mRNA"/>
</dbReference>
<dbReference type="RefSeq" id="NP_999538.1">
    <property type="nucleotide sequence ID" value="NM_214373.1"/>
</dbReference>
<dbReference type="BMRB" id="P61288"/>
<dbReference type="SMR" id="P61288"/>
<dbReference type="FunCoup" id="P61288">
    <property type="interactions" value="1618"/>
</dbReference>
<dbReference type="STRING" id="9823.ENSSSCP00000051362"/>
<dbReference type="PeptideAtlas" id="P61288"/>
<dbReference type="Ensembl" id="ENSSSCT00025015103.1">
    <property type="protein sequence ID" value="ENSSSCP00025005900.1"/>
    <property type="gene ID" value="ENSSSCG00025011421.1"/>
</dbReference>
<dbReference type="Ensembl" id="ENSSSCT00030084118.1">
    <property type="protein sequence ID" value="ENSSSCP00030038675.1"/>
    <property type="gene ID" value="ENSSSCG00030060243.1"/>
</dbReference>
<dbReference type="Ensembl" id="ENSSSCT00035096428.1">
    <property type="protein sequence ID" value="ENSSSCP00035040599.1"/>
    <property type="gene ID" value="ENSSSCG00035071288.1"/>
</dbReference>
<dbReference type="Ensembl" id="ENSSSCT00040007359.1">
    <property type="protein sequence ID" value="ENSSSCP00040002906.1"/>
    <property type="gene ID" value="ENSSSCG00040005536.1"/>
</dbReference>
<dbReference type="Ensembl" id="ENSSSCT00045066744.1">
    <property type="protein sequence ID" value="ENSSSCP00045047373.1"/>
    <property type="gene ID" value="ENSSSCG00045038459.1"/>
</dbReference>
<dbReference type="Ensembl" id="ENSSSCT00050079363.1">
    <property type="protein sequence ID" value="ENSSSCP00050034134.1"/>
    <property type="gene ID" value="ENSSSCG00050058199.1"/>
</dbReference>
<dbReference type="Ensembl" id="ENSSSCT00055054829.1">
    <property type="protein sequence ID" value="ENSSSCP00055043747.1"/>
    <property type="gene ID" value="ENSSSCG00055027593.1"/>
</dbReference>
<dbReference type="Ensembl" id="ENSSSCT00065067310.1">
    <property type="protein sequence ID" value="ENSSSCP00065029256.1"/>
    <property type="gene ID" value="ENSSSCG00065049149.1"/>
</dbReference>
<dbReference type="Ensembl" id="ENSSSCT00090001191">
    <property type="protein sequence ID" value="ENSSSCP00090000632"/>
    <property type="gene ID" value="ENSSSCG00090000783"/>
</dbReference>
<dbReference type="GeneID" id="397664"/>
<dbReference type="KEGG" id="ssc:397664"/>
<dbReference type="CTD" id="7178"/>
<dbReference type="InParanoid" id="P61288"/>
<dbReference type="OMA" id="CAMITEG"/>
<dbReference type="OrthoDB" id="9691754at2759"/>
<dbReference type="Proteomes" id="UP000008227">
    <property type="component" value="Unplaced"/>
</dbReference>
<dbReference type="Proteomes" id="UP000314985">
    <property type="component" value="Unplaced"/>
</dbReference>
<dbReference type="Proteomes" id="UP000694570">
    <property type="component" value="Unplaced"/>
</dbReference>
<dbReference type="Proteomes" id="UP000694571">
    <property type="component" value="Unplaced"/>
</dbReference>
<dbReference type="Proteomes" id="UP000694720">
    <property type="component" value="Unplaced"/>
</dbReference>
<dbReference type="Proteomes" id="UP000694722">
    <property type="component" value="Unplaced"/>
</dbReference>
<dbReference type="Proteomes" id="UP000694723">
    <property type="component" value="Unplaced"/>
</dbReference>
<dbReference type="Proteomes" id="UP000694724">
    <property type="component" value="Unplaced"/>
</dbReference>
<dbReference type="Proteomes" id="UP000694725">
    <property type="component" value="Unplaced"/>
</dbReference>
<dbReference type="Proteomes" id="UP000694726">
    <property type="component" value="Unplaced"/>
</dbReference>
<dbReference type="Proteomes" id="UP000694727">
    <property type="component" value="Unplaced"/>
</dbReference>
<dbReference type="Proteomes" id="UP000694728">
    <property type="component" value="Unplaced"/>
</dbReference>
<dbReference type="Bgee" id="ENSSSCG00000040929">
    <property type="expression patterns" value="Expressed in blood and 42 other cell types or tissues"/>
</dbReference>
<dbReference type="ExpressionAtlas" id="P61288">
    <property type="expression patterns" value="baseline and differential"/>
</dbReference>
<dbReference type="GO" id="GO:0005737">
    <property type="term" value="C:cytoplasm"/>
    <property type="evidence" value="ECO:0000250"/>
    <property type="project" value="AgBase"/>
</dbReference>
<dbReference type="GO" id="GO:0005881">
    <property type="term" value="C:cytoplasmic microtubule"/>
    <property type="evidence" value="ECO:0000250"/>
    <property type="project" value="AgBase"/>
</dbReference>
<dbReference type="GO" id="GO:0005615">
    <property type="term" value="C:extracellular space"/>
    <property type="evidence" value="ECO:0000250"/>
    <property type="project" value="AgBase"/>
</dbReference>
<dbReference type="GO" id="GO:0005771">
    <property type="term" value="C:multivesicular body"/>
    <property type="evidence" value="ECO:0000250"/>
    <property type="project" value="AgBase"/>
</dbReference>
<dbReference type="GO" id="GO:0000922">
    <property type="term" value="C:spindle pole"/>
    <property type="evidence" value="ECO:0000250"/>
    <property type="project" value="UniProtKB"/>
</dbReference>
<dbReference type="GO" id="GO:0005509">
    <property type="term" value="F:calcium ion binding"/>
    <property type="evidence" value="ECO:0000250"/>
    <property type="project" value="AgBase"/>
</dbReference>
<dbReference type="FunFam" id="2.170.150.10:FF:000001">
    <property type="entry name" value="Tumor protein, translationally-controlled 1"/>
    <property type="match status" value="1"/>
</dbReference>
<dbReference type="Gene3D" id="2.170.150.10">
    <property type="entry name" value="Metal Binding Protein, Guanine Nucleotide Exchange Factor, Chain A"/>
    <property type="match status" value="1"/>
</dbReference>
<dbReference type="InterPro" id="IPR011057">
    <property type="entry name" value="Mss4-like_sf"/>
</dbReference>
<dbReference type="InterPro" id="IPR011323">
    <property type="entry name" value="Mss4/transl-control_tumour"/>
</dbReference>
<dbReference type="InterPro" id="IPR034737">
    <property type="entry name" value="TCTP"/>
</dbReference>
<dbReference type="InterPro" id="IPR018103">
    <property type="entry name" value="Translation_control_tumour_CS"/>
</dbReference>
<dbReference type="InterPro" id="IPR018105">
    <property type="entry name" value="Translational_control_tumour_p"/>
</dbReference>
<dbReference type="PANTHER" id="PTHR11991">
    <property type="entry name" value="TRANSLATIONALLY CONTROLLED TUMOR PROTEIN-RELATED"/>
    <property type="match status" value="1"/>
</dbReference>
<dbReference type="PANTHER" id="PTHR11991:SF0">
    <property type="entry name" value="TRANSLATIONALLY-CONTROLLED TUMOR PROTEIN"/>
    <property type="match status" value="1"/>
</dbReference>
<dbReference type="Pfam" id="PF00838">
    <property type="entry name" value="TCTP"/>
    <property type="match status" value="1"/>
</dbReference>
<dbReference type="PRINTS" id="PR01653">
    <property type="entry name" value="TCTPROTEIN"/>
</dbReference>
<dbReference type="SUPFAM" id="SSF51316">
    <property type="entry name" value="Mss4-like"/>
    <property type="match status" value="1"/>
</dbReference>
<dbReference type="PROSITE" id="PS01002">
    <property type="entry name" value="TCTP_1"/>
    <property type="match status" value="1"/>
</dbReference>
<dbReference type="PROSITE" id="PS01003">
    <property type="entry name" value="TCTP_2"/>
    <property type="match status" value="1"/>
</dbReference>
<dbReference type="PROSITE" id="PS51797">
    <property type="entry name" value="TCTP_3"/>
    <property type="match status" value="1"/>
</dbReference>
<comment type="function">
    <text evidence="1">Involved in calcium binding and microtubule stabilization (By similarity). Acts as a negative regulator of TSC22D1-mediated apoptosis, via interaction with and destabilization of TSC22D1 protein (By similarity).</text>
</comment>
<comment type="subunit">
    <text evidence="1 2">Homodimer (By similarity). Interacts with STEAP3 (By similarity). Interacts with TSC22D1; interaction results in the destabilization of TSC22D1 protein (By similarity).</text>
</comment>
<comment type="subcellular location">
    <subcellularLocation>
        <location evidence="1">Cytoplasm</location>
    </subcellularLocation>
</comment>
<comment type="similarity">
    <text evidence="3">Belongs to the TCTP family.</text>
</comment>
<sequence>MIIYRDLISHDEMFSDIYKIREIADGLCLEVEGKMVSRTEGNIDDSLIGGNASAEGPEGEGTESTVITGVDIVMNHHLQETSFTKEAYKKYIKDYMKSIKGKLEEQRPERVKPFMTGAAEQIKHILANFKNYQFFIGENMNPDGMVALLDYREDGVTPYMIFFKDGLEMEKC</sequence>
<feature type="chain" id="PRO_0000211270" description="Translationally-controlled tumor protein">
    <location>
        <begin position="1"/>
        <end position="172"/>
    </location>
</feature>
<feature type="domain" description="TCTP" evidence="3">
    <location>
        <begin position="1"/>
        <end position="172"/>
    </location>
</feature>
<feature type="region of interest" description="Required for reduction of TSC22D1 protein stability" evidence="1">
    <location>
        <begin position="70"/>
        <end position="172"/>
    </location>
</feature>
<feature type="modified residue" description="Phosphoserine; by PLK1" evidence="1">
    <location>
        <position position="46"/>
    </location>
</feature>
<feature type="modified residue" description="Phosphoserine" evidence="1">
    <location>
        <position position="53"/>
    </location>
</feature>
<feature type="modified residue" description="Phosphoserine; by PLK1" evidence="1">
    <location>
        <position position="64"/>
    </location>
</feature>
<organism>
    <name type="scientific">Sus scrofa</name>
    <name type="common">Pig</name>
    <dbReference type="NCBI Taxonomy" id="9823"/>
    <lineage>
        <taxon>Eukaryota</taxon>
        <taxon>Metazoa</taxon>
        <taxon>Chordata</taxon>
        <taxon>Craniata</taxon>
        <taxon>Vertebrata</taxon>
        <taxon>Euteleostomi</taxon>
        <taxon>Mammalia</taxon>
        <taxon>Eutheria</taxon>
        <taxon>Laurasiatheria</taxon>
        <taxon>Artiodactyla</taxon>
        <taxon>Suina</taxon>
        <taxon>Suidae</taxon>
        <taxon>Sus</taxon>
    </lineage>
</organism>
<protein>
    <recommendedName>
        <fullName>Translationally-controlled tumor protein</fullName>
        <shortName>TCTP</shortName>
    </recommendedName>
</protein>
<accession>P61288</accession>
<keyword id="KW-0106">Calcium</keyword>
<keyword id="KW-0963">Cytoplasm</keyword>
<keyword id="KW-0597">Phosphoprotein</keyword>
<keyword id="KW-1185">Reference proteome</keyword>
<reference key="1">
    <citation type="submission" date="2002-01" db="EMBL/GenBank/DDBJ databases">
        <title>Molecular characterization of the gene coding for the pig translationally controlled tumor protein (TCTP).</title>
        <authorList>
            <person name="Yubero N."/>
            <person name="Barbancho M.J."/>
            <person name="Llanes D."/>
            <person name="Garrido J.J."/>
        </authorList>
    </citation>
    <scope>NUCLEOTIDE SEQUENCE [MRNA]</scope>
</reference>